<dbReference type="EC" id="2.8.1.4" evidence="1"/>
<dbReference type="EMBL" id="CP000942">
    <property type="protein sequence ID" value="ACA33176.1"/>
    <property type="molecule type" value="Genomic_DNA"/>
</dbReference>
<dbReference type="RefSeq" id="WP_006689025.1">
    <property type="nucleotide sequence ID" value="NC_010503.1"/>
</dbReference>
<dbReference type="SMR" id="B1AJ58"/>
<dbReference type="GeneID" id="29672603"/>
<dbReference type="KEGG" id="upa:UPA3_0436"/>
<dbReference type="HOGENOM" id="CLU_037952_4_0_14"/>
<dbReference type="UniPathway" id="UPA00060"/>
<dbReference type="Proteomes" id="UP000002162">
    <property type="component" value="Chromosome"/>
</dbReference>
<dbReference type="GO" id="GO:0005829">
    <property type="term" value="C:cytosol"/>
    <property type="evidence" value="ECO:0007669"/>
    <property type="project" value="TreeGrafter"/>
</dbReference>
<dbReference type="GO" id="GO:0005524">
    <property type="term" value="F:ATP binding"/>
    <property type="evidence" value="ECO:0007669"/>
    <property type="project" value="UniProtKB-UniRule"/>
</dbReference>
<dbReference type="GO" id="GO:0004810">
    <property type="term" value="F:CCA tRNA nucleotidyltransferase activity"/>
    <property type="evidence" value="ECO:0007669"/>
    <property type="project" value="InterPro"/>
</dbReference>
<dbReference type="GO" id="GO:0000049">
    <property type="term" value="F:tRNA binding"/>
    <property type="evidence" value="ECO:0007669"/>
    <property type="project" value="UniProtKB-UniRule"/>
</dbReference>
<dbReference type="GO" id="GO:0140741">
    <property type="term" value="F:tRNA-uracil-4 sulfurtransferase activity"/>
    <property type="evidence" value="ECO:0007669"/>
    <property type="project" value="UniProtKB-EC"/>
</dbReference>
<dbReference type="GO" id="GO:0009228">
    <property type="term" value="P:thiamine biosynthetic process"/>
    <property type="evidence" value="ECO:0007669"/>
    <property type="project" value="UniProtKB-KW"/>
</dbReference>
<dbReference type="GO" id="GO:0009229">
    <property type="term" value="P:thiamine diphosphate biosynthetic process"/>
    <property type="evidence" value="ECO:0007669"/>
    <property type="project" value="UniProtKB-UniRule"/>
</dbReference>
<dbReference type="GO" id="GO:0052837">
    <property type="term" value="P:thiazole biosynthetic process"/>
    <property type="evidence" value="ECO:0007669"/>
    <property type="project" value="TreeGrafter"/>
</dbReference>
<dbReference type="GO" id="GO:0002937">
    <property type="term" value="P:tRNA 4-thiouridine biosynthesis"/>
    <property type="evidence" value="ECO:0007669"/>
    <property type="project" value="TreeGrafter"/>
</dbReference>
<dbReference type="CDD" id="cd01712">
    <property type="entry name" value="PPase_ThiI"/>
    <property type="match status" value="1"/>
</dbReference>
<dbReference type="CDD" id="cd11716">
    <property type="entry name" value="THUMP_ThiI"/>
    <property type="match status" value="1"/>
</dbReference>
<dbReference type="FunFam" id="3.40.50.620:FF:000053">
    <property type="entry name" value="Probable tRNA sulfurtransferase"/>
    <property type="match status" value="1"/>
</dbReference>
<dbReference type="Gene3D" id="3.30.2130.30">
    <property type="match status" value="1"/>
</dbReference>
<dbReference type="Gene3D" id="3.40.50.620">
    <property type="entry name" value="HUPs"/>
    <property type="match status" value="1"/>
</dbReference>
<dbReference type="HAMAP" id="MF_00021">
    <property type="entry name" value="ThiI"/>
    <property type="match status" value="1"/>
</dbReference>
<dbReference type="InterPro" id="IPR014729">
    <property type="entry name" value="Rossmann-like_a/b/a_fold"/>
</dbReference>
<dbReference type="InterPro" id="IPR020536">
    <property type="entry name" value="ThiI_AANH"/>
</dbReference>
<dbReference type="InterPro" id="IPR054173">
    <property type="entry name" value="ThiI_fer"/>
</dbReference>
<dbReference type="InterPro" id="IPR049961">
    <property type="entry name" value="ThiI_N"/>
</dbReference>
<dbReference type="InterPro" id="IPR004114">
    <property type="entry name" value="THUMP_dom"/>
</dbReference>
<dbReference type="InterPro" id="IPR049962">
    <property type="entry name" value="THUMP_ThiI"/>
</dbReference>
<dbReference type="InterPro" id="IPR003720">
    <property type="entry name" value="tRNA_STrfase"/>
</dbReference>
<dbReference type="InterPro" id="IPR050102">
    <property type="entry name" value="tRNA_sulfurtransferase_ThiI"/>
</dbReference>
<dbReference type="NCBIfam" id="TIGR00342">
    <property type="entry name" value="tRNA uracil 4-sulfurtransferase ThiI"/>
    <property type="match status" value="1"/>
</dbReference>
<dbReference type="PANTHER" id="PTHR43209">
    <property type="entry name" value="TRNA SULFURTRANSFERASE"/>
    <property type="match status" value="1"/>
</dbReference>
<dbReference type="PANTHER" id="PTHR43209:SF1">
    <property type="entry name" value="TRNA SULFURTRANSFERASE"/>
    <property type="match status" value="1"/>
</dbReference>
<dbReference type="Pfam" id="PF02568">
    <property type="entry name" value="ThiI"/>
    <property type="match status" value="1"/>
</dbReference>
<dbReference type="Pfam" id="PF22025">
    <property type="entry name" value="ThiI_fer"/>
    <property type="match status" value="1"/>
</dbReference>
<dbReference type="Pfam" id="PF02926">
    <property type="entry name" value="THUMP"/>
    <property type="match status" value="1"/>
</dbReference>
<dbReference type="SMART" id="SM00981">
    <property type="entry name" value="THUMP"/>
    <property type="match status" value="1"/>
</dbReference>
<dbReference type="SUPFAM" id="SSF52402">
    <property type="entry name" value="Adenine nucleotide alpha hydrolases-like"/>
    <property type="match status" value="1"/>
</dbReference>
<dbReference type="SUPFAM" id="SSF143437">
    <property type="entry name" value="THUMP domain-like"/>
    <property type="match status" value="1"/>
</dbReference>
<dbReference type="PROSITE" id="PS51165">
    <property type="entry name" value="THUMP"/>
    <property type="match status" value="1"/>
</dbReference>
<keyword id="KW-0067">ATP-binding</keyword>
<keyword id="KW-0963">Cytoplasm</keyword>
<keyword id="KW-0547">Nucleotide-binding</keyword>
<keyword id="KW-0694">RNA-binding</keyword>
<keyword id="KW-0784">Thiamine biosynthesis</keyword>
<keyword id="KW-0808">Transferase</keyword>
<keyword id="KW-0820">tRNA-binding</keyword>
<organism>
    <name type="scientific">Ureaplasma parvum serovar 3 (strain ATCC 27815 / 27 / NCTC 11736)</name>
    <dbReference type="NCBI Taxonomy" id="505682"/>
    <lineage>
        <taxon>Bacteria</taxon>
        <taxon>Bacillati</taxon>
        <taxon>Mycoplasmatota</taxon>
        <taxon>Mycoplasmoidales</taxon>
        <taxon>Mycoplasmoidaceae</taxon>
        <taxon>Ureaplasma</taxon>
    </lineage>
</organism>
<gene>
    <name evidence="1" type="primary">thiI</name>
    <name type="ordered locus">UPA3_0436</name>
</gene>
<protein>
    <recommendedName>
        <fullName evidence="1">Probable tRNA sulfurtransferase</fullName>
        <ecNumber evidence="1">2.8.1.4</ecNumber>
    </recommendedName>
    <alternativeName>
        <fullName evidence="1">Sulfur carrier protein ThiS sulfurtransferase</fullName>
    </alternativeName>
    <alternativeName>
        <fullName evidence="1">Thiamine biosynthesis protein ThiI</fullName>
    </alternativeName>
    <alternativeName>
        <fullName evidence="1">tRNA 4-thiouridine synthase</fullName>
    </alternativeName>
</protein>
<name>THII_UREP2</name>
<sequence length="390" mass="44316">MKPIIYIKYGELTLKGKNRTQFIKVLVHNIKQILIQYQNLTYCVGYDNLKIINLENYNLKQIIDDLKEVYGIAFICIAYQVDKELSEIQLACKEFINDYEQTFKIEARRSDKSFKYNSMEIKQMCAAYLLQNSPLLKVDVHRPQLLINIEIKYDCAIVYGHKIMGAKGLPVGINGKALVLLSGGIDSPVASRLIMKRGISIDFITFITPPHTSQKALDKTIALAKQITLDNKLTKANLYVCNFTKLQDEIAHISKESYRITLMRRYFMRIAKRLAISVKANALVTGEALGQVASQTLNSMQTISSVLDNFLVLRPLIAYDKEEIISLAKRFNTYELSILPYDDSCSLFAPKNPTTNPNVQTAAKLEEESLVLDAIYELVYTKEITKINLS</sequence>
<evidence type="ECO:0000255" key="1">
    <source>
        <dbReference type="HAMAP-Rule" id="MF_00021"/>
    </source>
</evidence>
<reference key="1">
    <citation type="submission" date="2008-02" db="EMBL/GenBank/DDBJ databases">
        <title>Genome sequence of Ureaplasma parvum serovar 3.</title>
        <authorList>
            <person name="Methe B.A."/>
            <person name="Glass J."/>
            <person name="Waites K."/>
            <person name="Shrivastava S."/>
        </authorList>
    </citation>
    <scope>NUCLEOTIDE SEQUENCE [LARGE SCALE GENOMIC DNA]</scope>
    <source>
        <strain>ATCC 27815 / 27 / NCTC 11736</strain>
    </source>
</reference>
<comment type="function">
    <text evidence="1">Catalyzes the ATP-dependent transfer of a sulfur to tRNA to produce 4-thiouridine in position 8 of tRNAs, which functions as a near-UV photosensor. Also catalyzes the transfer of sulfur to the sulfur carrier protein ThiS, forming ThiS-thiocarboxylate. This is a step in the synthesis of thiazole, in the thiamine biosynthesis pathway. The sulfur is donated as persulfide by IscS.</text>
</comment>
<comment type="catalytic activity">
    <reaction evidence="1">
        <text>[ThiI sulfur-carrier protein]-S-sulfanyl-L-cysteine + a uridine in tRNA + 2 reduced [2Fe-2S]-[ferredoxin] + ATP + H(+) = [ThiI sulfur-carrier protein]-L-cysteine + a 4-thiouridine in tRNA + 2 oxidized [2Fe-2S]-[ferredoxin] + AMP + diphosphate</text>
        <dbReference type="Rhea" id="RHEA:24176"/>
        <dbReference type="Rhea" id="RHEA-COMP:10000"/>
        <dbReference type="Rhea" id="RHEA-COMP:10001"/>
        <dbReference type="Rhea" id="RHEA-COMP:13337"/>
        <dbReference type="Rhea" id="RHEA-COMP:13338"/>
        <dbReference type="Rhea" id="RHEA-COMP:13339"/>
        <dbReference type="Rhea" id="RHEA-COMP:13340"/>
        <dbReference type="ChEBI" id="CHEBI:15378"/>
        <dbReference type="ChEBI" id="CHEBI:29950"/>
        <dbReference type="ChEBI" id="CHEBI:30616"/>
        <dbReference type="ChEBI" id="CHEBI:33019"/>
        <dbReference type="ChEBI" id="CHEBI:33737"/>
        <dbReference type="ChEBI" id="CHEBI:33738"/>
        <dbReference type="ChEBI" id="CHEBI:61963"/>
        <dbReference type="ChEBI" id="CHEBI:65315"/>
        <dbReference type="ChEBI" id="CHEBI:136798"/>
        <dbReference type="ChEBI" id="CHEBI:456215"/>
        <dbReference type="EC" id="2.8.1.4"/>
    </reaction>
</comment>
<comment type="catalytic activity">
    <reaction evidence="1">
        <text>[ThiS sulfur-carrier protein]-C-terminal Gly-Gly-AMP + S-sulfanyl-L-cysteinyl-[cysteine desulfurase] + AH2 = [ThiS sulfur-carrier protein]-C-terminal-Gly-aminoethanethioate + L-cysteinyl-[cysteine desulfurase] + A + AMP + 2 H(+)</text>
        <dbReference type="Rhea" id="RHEA:43340"/>
        <dbReference type="Rhea" id="RHEA-COMP:12157"/>
        <dbReference type="Rhea" id="RHEA-COMP:12158"/>
        <dbReference type="Rhea" id="RHEA-COMP:12910"/>
        <dbReference type="Rhea" id="RHEA-COMP:19908"/>
        <dbReference type="ChEBI" id="CHEBI:13193"/>
        <dbReference type="ChEBI" id="CHEBI:15378"/>
        <dbReference type="ChEBI" id="CHEBI:17499"/>
        <dbReference type="ChEBI" id="CHEBI:29950"/>
        <dbReference type="ChEBI" id="CHEBI:61963"/>
        <dbReference type="ChEBI" id="CHEBI:90618"/>
        <dbReference type="ChEBI" id="CHEBI:232372"/>
        <dbReference type="ChEBI" id="CHEBI:456215"/>
    </reaction>
</comment>
<comment type="pathway">
    <text evidence="1">Cofactor biosynthesis; thiamine diphosphate biosynthesis.</text>
</comment>
<comment type="subcellular location">
    <subcellularLocation>
        <location evidence="1">Cytoplasm</location>
    </subcellularLocation>
</comment>
<comment type="similarity">
    <text evidence="1">Belongs to the ThiI family.</text>
</comment>
<feature type="chain" id="PRO_1000074306" description="Probable tRNA sulfurtransferase">
    <location>
        <begin position="1"/>
        <end position="390"/>
    </location>
</feature>
<feature type="domain" description="THUMP" evidence="1">
    <location>
        <begin position="60"/>
        <end position="162"/>
    </location>
</feature>
<feature type="binding site" evidence="1">
    <location>
        <begin position="180"/>
        <end position="181"/>
    </location>
    <ligand>
        <name>ATP</name>
        <dbReference type="ChEBI" id="CHEBI:30616"/>
    </ligand>
</feature>
<feature type="binding site" evidence="1">
    <location>
        <begin position="205"/>
        <end position="206"/>
    </location>
    <ligand>
        <name>ATP</name>
        <dbReference type="ChEBI" id="CHEBI:30616"/>
    </ligand>
</feature>
<feature type="binding site" evidence="1">
    <location>
        <position position="264"/>
    </location>
    <ligand>
        <name>ATP</name>
        <dbReference type="ChEBI" id="CHEBI:30616"/>
    </ligand>
</feature>
<feature type="binding site" evidence="1">
    <location>
        <position position="286"/>
    </location>
    <ligand>
        <name>ATP</name>
        <dbReference type="ChEBI" id="CHEBI:30616"/>
    </ligand>
</feature>
<feature type="binding site" evidence="1">
    <location>
        <position position="295"/>
    </location>
    <ligand>
        <name>ATP</name>
        <dbReference type="ChEBI" id="CHEBI:30616"/>
    </ligand>
</feature>
<accession>B1AJ58</accession>
<proteinExistence type="inferred from homology"/>